<feature type="signal peptide" evidence="2">
    <location>
        <begin position="1"/>
        <end position="48"/>
    </location>
</feature>
<feature type="chain" id="PRO_0000315751" description="Thioredoxin-related transmembrane protein 2">
    <location>
        <begin position="49"/>
        <end position="296"/>
    </location>
</feature>
<feature type="topological domain" description="Extracellular" evidence="2">
    <location>
        <begin position="49"/>
        <end position="102"/>
    </location>
</feature>
<feature type="transmembrane region" description="Helical" evidence="2">
    <location>
        <begin position="103"/>
        <end position="125"/>
    </location>
</feature>
<feature type="topological domain" description="Cytoplasmic" evidence="2">
    <location>
        <begin position="126"/>
        <end position="296"/>
    </location>
</feature>
<feature type="domain" description="Thioredoxin" evidence="3">
    <location>
        <begin position="132"/>
        <end position="269"/>
    </location>
</feature>
<feature type="region of interest" description="Disordered" evidence="4">
    <location>
        <begin position="272"/>
        <end position="296"/>
    </location>
</feature>
<feature type="short sequence motif" description="Di-lysine motif" evidence="6">
    <location>
        <begin position="293"/>
        <end position="296"/>
    </location>
</feature>
<feature type="compositionally biased region" description="Low complexity" evidence="4">
    <location>
        <begin position="277"/>
        <end position="287"/>
    </location>
</feature>
<feature type="modified residue" description="Phosphoserine" evidence="1">
    <location>
        <position position="211"/>
    </location>
</feature>
<feature type="modified residue" description="Phosphoserine" evidence="1">
    <location>
        <position position="243"/>
    </location>
</feature>
<feature type="splice variant" id="VSP_030695" description="In isoform 2." evidence="5">
    <location>
        <begin position="208"/>
        <end position="248"/>
    </location>
</feature>
<reference key="1">
    <citation type="journal article" date="2005" name="BMC Genomics">
        <title>Characterization of 954 bovine full-CDS cDNA sequences.</title>
        <authorList>
            <person name="Harhay G.P."/>
            <person name="Sonstegard T.S."/>
            <person name="Keele J.W."/>
            <person name="Heaton M.P."/>
            <person name="Clawson M.L."/>
            <person name="Snelling W.M."/>
            <person name="Wiedmann R.T."/>
            <person name="Van Tassell C.P."/>
            <person name="Smith T.P.L."/>
        </authorList>
    </citation>
    <scope>NUCLEOTIDE SEQUENCE [LARGE SCALE MRNA] (ISOFORM 2)</scope>
</reference>
<reference key="2">
    <citation type="submission" date="2005-11" db="EMBL/GenBank/DDBJ databases">
        <authorList>
            <consortium name="NIH - Mammalian Gene Collection (MGC) project"/>
        </authorList>
    </citation>
    <scope>NUCLEOTIDE SEQUENCE [LARGE SCALE MRNA] (ISOFORM 1)</scope>
    <source>
        <strain>Crossbred X Angus</strain>
        <tissue>Liver</tissue>
    </source>
</reference>
<proteinExistence type="evidence at transcript level"/>
<gene>
    <name type="primary">TMX2</name>
    <name type="synonym">TXNDC14</name>
</gene>
<keyword id="KW-0025">Alternative splicing</keyword>
<keyword id="KW-1015">Disulfide bond</keyword>
<keyword id="KW-0256">Endoplasmic reticulum</keyword>
<keyword id="KW-0472">Membrane</keyword>
<keyword id="KW-0496">Mitochondrion</keyword>
<keyword id="KW-0597">Phosphoprotein</keyword>
<keyword id="KW-1185">Reference proteome</keyword>
<keyword id="KW-0732">Signal</keyword>
<keyword id="KW-0812">Transmembrane</keyword>
<keyword id="KW-1133">Transmembrane helix</keyword>
<dbReference type="EMBL" id="BT021083">
    <property type="protein sequence ID" value="AAX09100.1"/>
    <property type="molecule type" value="mRNA"/>
</dbReference>
<dbReference type="EMBL" id="BC109664">
    <property type="protein sequence ID" value="AAI09665.1"/>
    <property type="molecule type" value="mRNA"/>
</dbReference>
<dbReference type="RefSeq" id="NP_001015558.1">
    <molecule id="Q2TBU2-2"/>
    <property type="nucleotide sequence ID" value="NM_001015558.1"/>
</dbReference>
<dbReference type="RefSeq" id="XP_005201014.1">
    <molecule id="Q2TBU2-1"/>
    <property type="nucleotide sequence ID" value="XM_005200957.3"/>
</dbReference>
<dbReference type="BMRB" id="Q2TBU2"/>
<dbReference type="SMR" id="Q2TBU2"/>
<dbReference type="FunCoup" id="Q2TBU2">
    <property type="interactions" value="2306"/>
</dbReference>
<dbReference type="STRING" id="9913.ENSBTAP00000041352"/>
<dbReference type="PaxDb" id="9913-ENSBTAP00000041352"/>
<dbReference type="Ensembl" id="ENSBTAT00000043809.3">
    <molecule id="Q2TBU2-1"/>
    <property type="protein sequence ID" value="ENSBTAP00000041352.1"/>
    <property type="gene ID" value="ENSBTAG00000002404.7"/>
</dbReference>
<dbReference type="GeneID" id="509244"/>
<dbReference type="KEGG" id="bta:509244"/>
<dbReference type="CTD" id="51075"/>
<dbReference type="VEuPathDB" id="HostDB:ENSBTAG00000002404"/>
<dbReference type="eggNOG" id="KOG0914">
    <property type="taxonomic scope" value="Eukaryota"/>
</dbReference>
<dbReference type="GeneTree" id="ENSGT00390000003751"/>
<dbReference type="HOGENOM" id="CLU_064868_0_0_1"/>
<dbReference type="InParanoid" id="Q2TBU2"/>
<dbReference type="OMA" id="TWIIEFF"/>
<dbReference type="OrthoDB" id="20229at2759"/>
<dbReference type="TreeFam" id="TF314606"/>
<dbReference type="Proteomes" id="UP000009136">
    <property type="component" value="Chromosome 15"/>
</dbReference>
<dbReference type="Bgee" id="ENSBTAG00000002404">
    <property type="expression patterns" value="Expressed in retina and 105 other cell types or tissues"/>
</dbReference>
<dbReference type="GO" id="GO:0005789">
    <property type="term" value="C:endoplasmic reticulum membrane"/>
    <property type="evidence" value="ECO:0000318"/>
    <property type="project" value="GO_Central"/>
</dbReference>
<dbReference type="GO" id="GO:0044233">
    <property type="term" value="C:mitochondria-associated endoplasmic reticulum membrane contact site"/>
    <property type="evidence" value="ECO:0000250"/>
    <property type="project" value="UniProtKB"/>
</dbReference>
<dbReference type="GO" id="GO:0031966">
    <property type="term" value="C:mitochondrial membrane"/>
    <property type="evidence" value="ECO:0007669"/>
    <property type="project" value="UniProtKB-SubCell"/>
</dbReference>
<dbReference type="GO" id="GO:0005739">
    <property type="term" value="C:mitochondrion"/>
    <property type="evidence" value="ECO:0000318"/>
    <property type="project" value="GO_Central"/>
</dbReference>
<dbReference type="GO" id="GO:0015036">
    <property type="term" value="F:disulfide oxidoreductase activity"/>
    <property type="evidence" value="ECO:0000250"/>
    <property type="project" value="UniProtKB"/>
</dbReference>
<dbReference type="GO" id="GO:0042802">
    <property type="term" value="F:identical protein binding"/>
    <property type="evidence" value="ECO:0007669"/>
    <property type="project" value="Ensembl"/>
</dbReference>
<dbReference type="GO" id="GO:0007420">
    <property type="term" value="P:brain development"/>
    <property type="evidence" value="ECO:0000250"/>
    <property type="project" value="UniProtKB"/>
</dbReference>
<dbReference type="CDD" id="cd02962">
    <property type="entry name" value="TMX2"/>
    <property type="match status" value="1"/>
</dbReference>
<dbReference type="Gene3D" id="3.40.30.10">
    <property type="entry name" value="Glutaredoxin"/>
    <property type="match status" value="1"/>
</dbReference>
<dbReference type="InterPro" id="IPR036249">
    <property type="entry name" value="Thioredoxin-like_sf"/>
</dbReference>
<dbReference type="InterPro" id="IPR013766">
    <property type="entry name" value="Thioredoxin_domain"/>
</dbReference>
<dbReference type="InterPro" id="IPR039101">
    <property type="entry name" value="TMX2"/>
</dbReference>
<dbReference type="InterPro" id="IPR037463">
    <property type="entry name" value="TMX2_thioredoxin_dom"/>
</dbReference>
<dbReference type="PANTHER" id="PTHR15853">
    <property type="entry name" value="THIOREDOXIN-RELATED"/>
    <property type="match status" value="1"/>
</dbReference>
<dbReference type="PANTHER" id="PTHR15853:SF0">
    <property type="entry name" value="THIOREDOXIN-RELATED TRANSMEMBRANE PROTEIN 2"/>
    <property type="match status" value="1"/>
</dbReference>
<dbReference type="Pfam" id="PF00085">
    <property type="entry name" value="Thioredoxin"/>
    <property type="match status" value="1"/>
</dbReference>
<dbReference type="SUPFAM" id="SSF52833">
    <property type="entry name" value="Thioredoxin-like"/>
    <property type="match status" value="1"/>
</dbReference>
<dbReference type="PROSITE" id="PS51352">
    <property type="entry name" value="THIOREDOXIN_2"/>
    <property type="match status" value="1"/>
</dbReference>
<comment type="function">
    <text evidence="1">Endoplasmic reticulum and mitochondria-associated protein that probably functions as a regulator of cellular redox state and thereby regulates protein post-translational modification, protein folding and mitochondrial activity. Indirectly regulates neuronal proliferation, migration, and organization in the developing brain.</text>
</comment>
<comment type="subunit">
    <text evidence="1">Monomer (By similarity). Homodimer; disulfide-linked (By similarity). Occurs in both reduced and oxidized monomeric form (By similarity). Oxidative conditions increase homodimerization (By similarity). Interacts with CANX (By similarity). Interacts with ATP2A2 (By similarity).</text>
</comment>
<comment type="subcellular location">
    <subcellularLocation>
        <location evidence="1">Endoplasmic reticulum membrane</location>
        <topology evidence="2">Single-pass type I membrane protein</topology>
    </subcellularLocation>
    <subcellularLocation>
        <location evidence="1">Mitochondrion membrane</location>
        <topology evidence="2">Single-pass type I membrane protein</topology>
    </subcellularLocation>
    <text evidence="1">Localizes to endoplasmic reticulum mitochondria-associated membrane (MAMs) that connect the endoplasmic reticulum and the mitochondria.</text>
</comment>
<comment type="alternative products">
    <event type="alternative splicing"/>
    <isoform>
        <id>Q2TBU2-1</id>
        <name>1</name>
        <sequence type="displayed"/>
    </isoform>
    <isoform>
        <id>Q2TBU2-2</id>
        <name>2</name>
        <sequence type="described" ref="VSP_030695"/>
    </isoform>
</comment>
<comment type="domain">
    <text evidence="6">The thioredoxin domain lacks the 2 redox-active cysteines, suggesting that it lacks thioredoxin activity.</text>
</comment>
<comment type="domain">
    <text evidence="6">The di-lysine motif confers endoplasmic reticulum localization for type I membrane proteins.</text>
</comment>
<protein>
    <recommendedName>
        <fullName>Thioredoxin-related transmembrane protein 2</fullName>
    </recommendedName>
    <alternativeName>
        <fullName>Thioredoxin domain-containing protein 14</fullName>
    </alternativeName>
</protein>
<sequence length="296" mass="34029">MAVLAPLIALVYSVPRLSRWLARPYYFLSALLSAAFLLVRKLPPVCESLPTQREDGNPCDFDWREVEILMFLSAIVMMKNRRSITVEQHVGNIFMFSKVANAILFFRLDIRMGLLYITLCIVFLMTCKPPLYMGPEYIKYFSDKTIDEELERDKRVTWIVEFFANWSSDCQSFAPIYADLSLKYNCTGLNFGKVDVGRYTDVSTRYKVSTSPLTKQLPTLILFQGGKEVMRRPQIDKKGRAVSWTFSEENVIREFNLNELYQRAKKLSKAGDKIPEEQPVAAVPAAVPDEESKKDK</sequence>
<evidence type="ECO:0000250" key="1">
    <source>
        <dbReference type="UniProtKB" id="Q9Y320"/>
    </source>
</evidence>
<evidence type="ECO:0000255" key="2"/>
<evidence type="ECO:0000255" key="3">
    <source>
        <dbReference type="PROSITE-ProRule" id="PRU00691"/>
    </source>
</evidence>
<evidence type="ECO:0000256" key="4">
    <source>
        <dbReference type="SAM" id="MobiDB-lite"/>
    </source>
</evidence>
<evidence type="ECO:0000303" key="5">
    <source>
    </source>
</evidence>
<evidence type="ECO:0000305" key="6"/>
<accession>Q2TBU2</accession>
<accession>Q5E937</accession>
<name>TMX2_BOVIN</name>
<organism>
    <name type="scientific">Bos taurus</name>
    <name type="common">Bovine</name>
    <dbReference type="NCBI Taxonomy" id="9913"/>
    <lineage>
        <taxon>Eukaryota</taxon>
        <taxon>Metazoa</taxon>
        <taxon>Chordata</taxon>
        <taxon>Craniata</taxon>
        <taxon>Vertebrata</taxon>
        <taxon>Euteleostomi</taxon>
        <taxon>Mammalia</taxon>
        <taxon>Eutheria</taxon>
        <taxon>Laurasiatheria</taxon>
        <taxon>Artiodactyla</taxon>
        <taxon>Ruminantia</taxon>
        <taxon>Pecora</taxon>
        <taxon>Bovidae</taxon>
        <taxon>Bovinae</taxon>
        <taxon>Bos</taxon>
    </lineage>
</organism>